<reference key="1">
    <citation type="journal article" date="2007" name="J. Bacteriol.">
        <title>Whole-genome analysis of the methyl tert-butyl ether-degrading beta-proteobacterium Methylibium petroleiphilum PM1.</title>
        <authorList>
            <person name="Kane S.R."/>
            <person name="Chakicherla A.Y."/>
            <person name="Chain P.S.G."/>
            <person name="Schmidt R."/>
            <person name="Shin M.W."/>
            <person name="Legler T.C."/>
            <person name="Scow K.M."/>
            <person name="Larimer F.W."/>
            <person name="Lucas S.M."/>
            <person name="Richardson P.M."/>
            <person name="Hristova K.R."/>
        </authorList>
    </citation>
    <scope>NUCLEOTIDE SEQUENCE [LARGE SCALE GENOMIC DNA]</scope>
    <source>
        <strain>ATCC BAA-1232 / LMG 22953 / PM1</strain>
    </source>
</reference>
<accession>A2SCF8</accession>
<organism>
    <name type="scientific">Methylibium petroleiphilum (strain ATCC BAA-1232 / LMG 22953 / PM1)</name>
    <dbReference type="NCBI Taxonomy" id="420662"/>
    <lineage>
        <taxon>Bacteria</taxon>
        <taxon>Pseudomonadati</taxon>
        <taxon>Pseudomonadota</taxon>
        <taxon>Betaproteobacteria</taxon>
        <taxon>Burkholderiales</taxon>
        <taxon>Sphaerotilaceae</taxon>
        <taxon>Methylibium</taxon>
    </lineage>
</organism>
<dbReference type="EC" id="3.4.24.-" evidence="1"/>
<dbReference type="EMBL" id="CP000555">
    <property type="protein sequence ID" value="ABM93247.1"/>
    <property type="molecule type" value="Genomic_DNA"/>
</dbReference>
<dbReference type="RefSeq" id="WP_011827886.1">
    <property type="nucleotide sequence ID" value="NC_008825.1"/>
</dbReference>
<dbReference type="SMR" id="A2SCF8"/>
<dbReference type="STRING" id="420662.Mpe_A0285"/>
<dbReference type="KEGG" id="mpt:Mpe_A0285"/>
<dbReference type="eggNOG" id="COG0501">
    <property type="taxonomic scope" value="Bacteria"/>
</dbReference>
<dbReference type="HOGENOM" id="CLU_042266_3_0_4"/>
<dbReference type="Proteomes" id="UP000000366">
    <property type="component" value="Chromosome"/>
</dbReference>
<dbReference type="GO" id="GO:0005886">
    <property type="term" value="C:plasma membrane"/>
    <property type="evidence" value="ECO:0007669"/>
    <property type="project" value="UniProtKB-SubCell"/>
</dbReference>
<dbReference type="GO" id="GO:0004222">
    <property type="term" value="F:metalloendopeptidase activity"/>
    <property type="evidence" value="ECO:0007669"/>
    <property type="project" value="UniProtKB-UniRule"/>
</dbReference>
<dbReference type="GO" id="GO:0008270">
    <property type="term" value="F:zinc ion binding"/>
    <property type="evidence" value="ECO:0007669"/>
    <property type="project" value="UniProtKB-UniRule"/>
</dbReference>
<dbReference type="GO" id="GO:0006508">
    <property type="term" value="P:proteolysis"/>
    <property type="evidence" value="ECO:0007669"/>
    <property type="project" value="UniProtKB-KW"/>
</dbReference>
<dbReference type="CDD" id="cd07336">
    <property type="entry name" value="M48B_HtpX_like"/>
    <property type="match status" value="1"/>
</dbReference>
<dbReference type="Gene3D" id="3.30.2010.10">
    <property type="entry name" value="Metalloproteases ('zincins'), catalytic domain"/>
    <property type="match status" value="1"/>
</dbReference>
<dbReference type="HAMAP" id="MF_00188">
    <property type="entry name" value="Pept_M48_protease_HtpX"/>
    <property type="match status" value="1"/>
</dbReference>
<dbReference type="InterPro" id="IPR050083">
    <property type="entry name" value="HtpX_protease"/>
</dbReference>
<dbReference type="InterPro" id="IPR022919">
    <property type="entry name" value="Pept_M48_protease_HtpX"/>
</dbReference>
<dbReference type="InterPro" id="IPR001915">
    <property type="entry name" value="Peptidase_M48"/>
</dbReference>
<dbReference type="NCBIfam" id="NF002363">
    <property type="entry name" value="PRK01345.1"/>
    <property type="match status" value="1"/>
</dbReference>
<dbReference type="NCBIfam" id="NF002826">
    <property type="entry name" value="PRK03001.1"/>
    <property type="match status" value="1"/>
</dbReference>
<dbReference type="PANTHER" id="PTHR43221">
    <property type="entry name" value="PROTEASE HTPX"/>
    <property type="match status" value="1"/>
</dbReference>
<dbReference type="PANTHER" id="PTHR43221:SF1">
    <property type="entry name" value="PROTEASE HTPX"/>
    <property type="match status" value="1"/>
</dbReference>
<dbReference type="Pfam" id="PF01435">
    <property type="entry name" value="Peptidase_M48"/>
    <property type="match status" value="1"/>
</dbReference>
<evidence type="ECO:0000255" key="1">
    <source>
        <dbReference type="HAMAP-Rule" id="MF_00188"/>
    </source>
</evidence>
<comment type="cofactor">
    <cofactor evidence="1">
        <name>Zn(2+)</name>
        <dbReference type="ChEBI" id="CHEBI:29105"/>
    </cofactor>
    <text evidence="1">Binds 1 zinc ion per subunit.</text>
</comment>
<comment type="subcellular location">
    <subcellularLocation>
        <location evidence="1">Cell inner membrane</location>
        <topology evidence="1">Multi-pass membrane protein</topology>
    </subcellularLocation>
</comment>
<comment type="similarity">
    <text evidence="1">Belongs to the peptidase M48B family.</text>
</comment>
<gene>
    <name evidence="1" type="primary">htpX</name>
    <name type="ordered locus">Mpe_A0285</name>
</gene>
<sequence length="283" mass="30267">MFNLMKTAVLMAAITALFMAIGSVLGGQQGMAIALVVALGMNFFSYWFSDKMVLKMYNAQEVDASSAPQFYGMVRELAAKAELPMPKVYLINEDAPNAFATGRNPQNAAVAATTGILRVLSERELRGVMAHELAHVKHRDILISTISATMAGAISMLANFAMFFGGRGSDGRPANPIAGILVMLLAPLAASLIQMAISRAREFEADRGGAEISGDPQALASALQKIQRYAQGIPLEAAERHPETAQMMIMNPLSGGGLRGLFSTHPATEERVAKLMAMVPQRV</sequence>
<proteinExistence type="inferred from homology"/>
<name>HTPX_METPP</name>
<protein>
    <recommendedName>
        <fullName evidence="1">Protease HtpX homolog</fullName>
        <ecNumber evidence="1">3.4.24.-</ecNumber>
    </recommendedName>
</protein>
<feature type="chain" id="PRO_1000077470" description="Protease HtpX homolog">
    <location>
        <begin position="1"/>
        <end position="283"/>
    </location>
</feature>
<feature type="transmembrane region" description="Helical" evidence="1">
    <location>
        <begin position="7"/>
        <end position="27"/>
    </location>
</feature>
<feature type="transmembrane region" description="Helical" evidence="1">
    <location>
        <begin position="29"/>
        <end position="49"/>
    </location>
</feature>
<feature type="transmembrane region" description="Helical" evidence="1">
    <location>
        <begin position="146"/>
        <end position="166"/>
    </location>
</feature>
<feature type="transmembrane region" description="Helical" evidence="1">
    <location>
        <begin position="177"/>
        <end position="197"/>
    </location>
</feature>
<feature type="active site" evidence="1">
    <location>
        <position position="132"/>
    </location>
</feature>
<feature type="binding site" evidence="1">
    <location>
        <position position="131"/>
    </location>
    <ligand>
        <name>Zn(2+)</name>
        <dbReference type="ChEBI" id="CHEBI:29105"/>
        <note>catalytic</note>
    </ligand>
</feature>
<feature type="binding site" evidence="1">
    <location>
        <position position="135"/>
    </location>
    <ligand>
        <name>Zn(2+)</name>
        <dbReference type="ChEBI" id="CHEBI:29105"/>
        <note>catalytic</note>
    </ligand>
</feature>
<feature type="binding site" evidence="1">
    <location>
        <position position="202"/>
    </location>
    <ligand>
        <name>Zn(2+)</name>
        <dbReference type="ChEBI" id="CHEBI:29105"/>
        <note>catalytic</note>
    </ligand>
</feature>
<keyword id="KW-0997">Cell inner membrane</keyword>
<keyword id="KW-1003">Cell membrane</keyword>
<keyword id="KW-0378">Hydrolase</keyword>
<keyword id="KW-0472">Membrane</keyword>
<keyword id="KW-0479">Metal-binding</keyword>
<keyword id="KW-0482">Metalloprotease</keyword>
<keyword id="KW-0645">Protease</keyword>
<keyword id="KW-1185">Reference proteome</keyword>
<keyword id="KW-0812">Transmembrane</keyword>
<keyword id="KW-1133">Transmembrane helix</keyword>
<keyword id="KW-0862">Zinc</keyword>